<gene>
    <name evidence="1" type="primary">gloB</name>
    <name type="ordered locus">BUsg_238</name>
</gene>
<dbReference type="EC" id="3.1.2.6" evidence="1"/>
<dbReference type="EMBL" id="L18927">
    <property type="protein sequence ID" value="AAA17433.1"/>
    <property type="molecule type" value="Genomic_DNA"/>
</dbReference>
<dbReference type="EMBL" id="AE013218">
    <property type="protein sequence ID" value="AAM67797.1"/>
    <property type="molecule type" value="Genomic_DNA"/>
</dbReference>
<dbReference type="PIR" id="I40592">
    <property type="entry name" value="I40592"/>
</dbReference>
<dbReference type="RefSeq" id="WP_011053764.1">
    <property type="nucleotide sequence ID" value="NC_004061.1"/>
</dbReference>
<dbReference type="SMR" id="Q08889"/>
<dbReference type="STRING" id="198804.BUsg_238"/>
<dbReference type="GeneID" id="93003707"/>
<dbReference type="KEGG" id="bas:BUsg_238"/>
<dbReference type="eggNOG" id="COG0491">
    <property type="taxonomic scope" value="Bacteria"/>
</dbReference>
<dbReference type="HOGENOM" id="CLU_030571_4_1_6"/>
<dbReference type="UniPathway" id="UPA00619">
    <property type="reaction ID" value="UER00676"/>
</dbReference>
<dbReference type="Proteomes" id="UP000000416">
    <property type="component" value="Chromosome"/>
</dbReference>
<dbReference type="GO" id="GO:0004416">
    <property type="term" value="F:hydroxyacylglutathione hydrolase activity"/>
    <property type="evidence" value="ECO:0007669"/>
    <property type="project" value="UniProtKB-UniRule"/>
</dbReference>
<dbReference type="GO" id="GO:0046872">
    <property type="term" value="F:metal ion binding"/>
    <property type="evidence" value="ECO:0007669"/>
    <property type="project" value="UniProtKB-KW"/>
</dbReference>
<dbReference type="GO" id="GO:0019243">
    <property type="term" value="P:methylglyoxal catabolic process to D-lactate via S-lactoyl-glutathione"/>
    <property type="evidence" value="ECO:0007669"/>
    <property type="project" value="InterPro"/>
</dbReference>
<dbReference type="CDD" id="cd07723">
    <property type="entry name" value="hydroxyacylglutathione_hydrolase_MBL-fold"/>
    <property type="match status" value="1"/>
</dbReference>
<dbReference type="Gene3D" id="3.60.15.10">
    <property type="entry name" value="Ribonuclease Z/Hydroxyacylglutathione hydrolase-like"/>
    <property type="match status" value="1"/>
</dbReference>
<dbReference type="HAMAP" id="MF_01374">
    <property type="entry name" value="Glyoxalase_2"/>
    <property type="match status" value="1"/>
</dbReference>
<dbReference type="InterPro" id="IPR035680">
    <property type="entry name" value="Clx_II_MBL"/>
</dbReference>
<dbReference type="InterPro" id="IPR050110">
    <property type="entry name" value="Glyoxalase_II_hydrolase"/>
</dbReference>
<dbReference type="InterPro" id="IPR032282">
    <property type="entry name" value="HAGH_C"/>
</dbReference>
<dbReference type="InterPro" id="IPR017782">
    <property type="entry name" value="Hydroxyacylglutathione_Hdrlase"/>
</dbReference>
<dbReference type="InterPro" id="IPR001279">
    <property type="entry name" value="Metallo-B-lactamas"/>
</dbReference>
<dbReference type="InterPro" id="IPR036866">
    <property type="entry name" value="RibonucZ/Hydroxyglut_hydro"/>
</dbReference>
<dbReference type="NCBIfam" id="TIGR03413">
    <property type="entry name" value="GSH_gloB"/>
    <property type="match status" value="1"/>
</dbReference>
<dbReference type="PANTHER" id="PTHR43705">
    <property type="entry name" value="HYDROXYACYLGLUTATHIONE HYDROLASE"/>
    <property type="match status" value="1"/>
</dbReference>
<dbReference type="PANTHER" id="PTHR43705:SF1">
    <property type="entry name" value="HYDROXYACYLGLUTATHIONE HYDROLASE GLOB"/>
    <property type="match status" value="1"/>
</dbReference>
<dbReference type="Pfam" id="PF16123">
    <property type="entry name" value="HAGH_C"/>
    <property type="match status" value="1"/>
</dbReference>
<dbReference type="Pfam" id="PF00753">
    <property type="entry name" value="Lactamase_B"/>
    <property type="match status" value="1"/>
</dbReference>
<dbReference type="PIRSF" id="PIRSF005457">
    <property type="entry name" value="Glx"/>
    <property type="match status" value="1"/>
</dbReference>
<dbReference type="SMART" id="SM00849">
    <property type="entry name" value="Lactamase_B"/>
    <property type="match status" value="1"/>
</dbReference>
<dbReference type="SUPFAM" id="SSF56281">
    <property type="entry name" value="Metallo-hydrolase/oxidoreductase"/>
    <property type="match status" value="1"/>
</dbReference>
<comment type="function">
    <text evidence="1">Thiolesterase that catalyzes the hydrolysis of S-D-lactoyl-glutathione to form glutathione and D-lactic acid.</text>
</comment>
<comment type="catalytic activity">
    <reaction evidence="1">
        <text>an S-(2-hydroxyacyl)glutathione + H2O = a 2-hydroxy carboxylate + glutathione + H(+)</text>
        <dbReference type="Rhea" id="RHEA:21864"/>
        <dbReference type="ChEBI" id="CHEBI:15377"/>
        <dbReference type="ChEBI" id="CHEBI:15378"/>
        <dbReference type="ChEBI" id="CHEBI:57925"/>
        <dbReference type="ChEBI" id="CHEBI:58896"/>
        <dbReference type="ChEBI" id="CHEBI:71261"/>
        <dbReference type="EC" id="3.1.2.6"/>
    </reaction>
</comment>
<comment type="cofactor">
    <cofactor evidence="1">
        <name>Zn(2+)</name>
        <dbReference type="ChEBI" id="CHEBI:29105"/>
    </cofactor>
    <text evidence="1">Binds 2 Zn(2+) ions per subunit.</text>
</comment>
<comment type="pathway">
    <text evidence="1">Secondary metabolite metabolism; methylglyoxal degradation; (R)-lactate from methylglyoxal: step 2/2.</text>
</comment>
<comment type="subunit">
    <text evidence="1">Monomer.</text>
</comment>
<comment type="similarity">
    <text evidence="1">Belongs to the metallo-beta-lactamase superfamily. Glyoxalase II family.</text>
</comment>
<reference key="1">
    <citation type="journal article" date="1993" name="Gene">
        <title>Buchnera aphidicola (a prokaryotic endosymbiont of aphids) contains a putative 16S rRNA operon unlinked to the 23S rRNA-encoding gene: sequence determination, and promoter and terminator analysis.</title>
        <authorList>
            <person name="Munson M.A."/>
            <person name="Baumann L."/>
            <person name="Baumann P."/>
        </authorList>
    </citation>
    <scope>NUCLEOTIDE SEQUENCE [GENOMIC DNA]</scope>
</reference>
<reference key="2">
    <citation type="journal article" date="2002" name="Science">
        <title>50 million years of genomic stasis in endosymbiotic bacteria.</title>
        <authorList>
            <person name="Tamas I."/>
            <person name="Klasson L."/>
            <person name="Canbaeck B."/>
            <person name="Naeslund A.K."/>
            <person name="Eriksson A.-S."/>
            <person name="Wernegreen J.J."/>
            <person name="Sandstroem J.P."/>
            <person name="Moran N.A."/>
            <person name="Andersson S.G.E."/>
        </authorList>
    </citation>
    <scope>NUCLEOTIDE SEQUENCE [LARGE SCALE GENOMIC DNA]</scope>
    <source>
        <strain>Sg</strain>
    </source>
</reference>
<organism>
    <name type="scientific">Buchnera aphidicola subsp. Schizaphis graminum (strain Sg)</name>
    <dbReference type="NCBI Taxonomy" id="198804"/>
    <lineage>
        <taxon>Bacteria</taxon>
        <taxon>Pseudomonadati</taxon>
        <taxon>Pseudomonadota</taxon>
        <taxon>Gammaproteobacteria</taxon>
        <taxon>Enterobacterales</taxon>
        <taxon>Erwiniaceae</taxon>
        <taxon>Buchnera</taxon>
    </lineage>
</organism>
<protein>
    <recommendedName>
        <fullName evidence="1">Hydroxyacylglutathione hydrolase</fullName>
        <ecNumber evidence="1">3.1.2.6</ecNumber>
    </recommendedName>
    <alternativeName>
        <fullName evidence="1">Glyoxalase II</fullName>
        <shortName evidence="1">Glx II</shortName>
    </alternativeName>
</protein>
<accession>Q08889</accession>
<name>GLO2_BUCAP</name>
<proteinExistence type="inferred from homology"/>
<feature type="chain" id="PRO_0000192349" description="Hydroxyacylglutathione hydrolase">
    <location>
        <begin position="1"/>
        <end position="250"/>
    </location>
</feature>
<feature type="binding site" evidence="1">
    <location>
        <position position="53"/>
    </location>
    <ligand>
        <name>Zn(2+)</name>
        <dbReference type="ChEBI" id="CHEBI:29105"/>
        <label>1</label>
    </ligand>
</feature>
<feature type="binding site" evidence="1">
    <location>
        <position position="55"/>
    </location>
    <ligand>
        <name>Zn(2+)</name>
        <dbReference type="ChEBI" id="CHEBI:29105"/>
        <label>1</label>
    </ligand>
</feature>
<feature type="binding site" evidence="1">
    <location>
        <position position="57"/>
    </location>
    <ligand>
        <name>Zn(2+)</name>
        <dbReference type="ChEBI" id="CHEBI:29105"/>
        <label>2</label>
    </ligand>
</feature>
<feature type="binding site" evidence="1">
    <location>
        <position position="58"/>
    </location>
    <ligand>
        <name>Zn(2+)</name>
        <dbReference type="ChEBI" id="CHEBI:29105"/>
        <label>2</label>
    </ligand>
</feature>
<feature type="binding site" evidence="1">
    <location>
        <position position="110"/>
    </location>
    <ligand>
        <name>Zn(2+)</name>
        <dbReference type="ChEBI" id="CHEBI:29105"/>
        <label>1</label>
    </ligand>
</feature>
<feature type="binding site" evidence="1">
    <location>
        <position position="127"/>
    </location>
    <ligand>
        <name>Zn(2+)</name>
        <dbReference type="ChEBI" id="CHEBI:29105"/>
        <label>1</label>
    </ligand>
</feature>
<feature type="binding site" evidence="1">
    <location>
        <position position="127"/>
    </location>
    <ligand>
        <name>Zn(2+)</name>
        <dbReference type="ChEBI" id="CHEBI:29105"/>
        <label>2</label>
    </ligand>
</feature>
<feature type="binding site" evidence="1">
    <location>
        <position position="165"/>
    </location>
    <ligand>
        <name>Zn(2+)</name>
        <dbReference type="ChEBI" id="CHEBI:29105"/>
        <label>2</label>
    </ligand>
</feature>
<keyword id="KW-0378">Hydrolase</keyword>
<keyword id="KW-0479">Metal-binding</keyword>
<keyword id="KW-0862">Zinc</keyword>
<evidence type="ECO:0000255" key="1">
    <source>
        <dbReference type="HAMAP-Rule" id="MF_01374"/>
    </source>
</evidence>
<sequence>MILTSISVLKDNYVWILYNDNCSCIIIDPGVSEDIIKKIEKKNWKLIAILLTHNHIDHVGGVEEIIRRYPNVTVFGPEETKTRNVNKIVKQGDVIKLLKSEIHVFLTPGHTLGHVSYYLKPYIFCGDTLFSGGCGRVFKNKFFDMYQSINFIKSLPKKTILCCSHEYTLSNLNFAMSILPFDKKIKKYYKKIKKHISQNKTSLPVSLETEKKINIFLRTNEKTIKKAMGLKKDTSSFEVFILLRKEKDDF</sequence>